<comment type="function">
    <text evidence="1">Involved in the alternative regulation of pre-mRNA splicing; its RNA helicase activity is necessary for increasing tau exon 10 inclusion and occurs in a RBM4-dependent manner. Binds to the tau pre-mRNA in the stem-loop region downstream of exon 10. The rate of ATP hydrolysis is highly stimulated by single-stranded RNA. Involved in transcriptional regulation; the function is independent of the RNA helicase activity. Transcriptional coactivator for androgen receptor AR but probably not ESR1. Synergizes with DDX17 and SRA1 RNA to activate MYOD1 transcriptional activity and involved in skeletal muscle differentiation. Transcriptional coactivator for p53/TP53 and involved in p53/TP53 transcriptional response to DNA damage and p53/TP53-dependent apoptosis. Transcriptional coactivator for RUNX2 and involved in regulation of osteoblast differentiation. Acts as a transcriptional repressor in a promoter-specific manner; the function probably involves association with histone deacetylases, such as HDAC1. As component of a large PER complex is involved in the inhibition of 3' transcriptional termination of circadian target genes such as PER1 and NR1D1 and the control of the circadian rhythms (By similarity).</text>
</comment>
<comment type="catalytic activity">
    <reaction>
        <text>ATP + H2O = ADP + phosphate + H(+)</text>
        <dbReference type="Rhea" id="RHEA:13065"/>
        <dbReference type="ChEBI" id="CHEBI:15377"/>
        <dbReference type="ChEBI" id="CHEBI:15378"/>
        <dbReference type="ChEBI" id="CHEBI:30616"/>
        <dbReference type="ChEBI" id="CHEBI:43474"/>
        <dbReference type="ChEBI" id="CHEBI:456216"/>
        <dbReference type="EC" id="3.6.4.13"/>
    </reaction>
</comment>
<comment type="subunit">
    <text evidence="2 3">Identified in the spliceosome C complex. Component of a ribonucleoprotein complex containing mRNAs and RNA-binding proteins including DDX5, HNRNPH2 and SRSF1 as well as splicing regulator ARVCF. Interacts with RBM4; the interaction occurs in an RNA-independent manner. Interacts with AGO1 and AGO2. Interacts with ESR1, AR, EP300, CREBBP, POLR2A, TP53, RUNX2 and HDAC1. Self-associates. Interacts with DDX17. Interacts with BRDT. The large PER complex involved in the repression of transcriptional termination is composed of at least PER2, CDK9, DDX5, DHX9, NCBP1 and POLR2A (active) (By similarity). Interacts with DHX36; this interaction occurs in a RNA-dependent manner (By similarity). Interacts with NUPR1 (By similarity). Interacts with ERCC6 (By similarity). Interacts with DDX3X in the cytoplasm; this interaction may be more efficient when both proteins are unphosphorylated (By similarity).</text>
</comment>
<comment type="subcellular location">
    <subcellularLocation>
        <location evidence="2">Nucleus</location>
    </subcellularLocation>
    <subcellularLocation>
        <location evidence="2">Nucleus</location>
        <location evidence="2">Nucleolus</location>
    </subcellularLocation>
    <subcellularLocation>
        <location evidence="2">Cytoplasm</location>
    </subcellularLocation>
    <text evidence="2">During the G0 phase, predominantly located in the nucleus. Cytoplasmic levels increase during the G1/S phase. During the M phase, located at the vicinity of the condensed chromosomes. At G1, localizes in the cytoplasm.</text>
</comment>
<comment type="PTM">
    <text evidence="2">Sumoylated; sumoylation, promoted by PIAS1, promotes interaction with HDAC1 and transcriptional repression activity. Sumoylation also significantly increases stability, and reduces polyubiquitination (By similarity).</text>
</comment>
<comment type="PTM">
    <text evidence="2">Polyubiquitinated, leading to proteasomal degradation.</text>
</comment>
<comment type="PTM">
    <text evidence="2">Weakly phosphorylated in the G1/S phase of the cell cycle and much more at G2/M, especially at Thr and Tyr residues.</text>
</comment>
<comment type="similarity">
    <text evidence="7">Belongs to the DEAD box helicase family. DDX5/DBP2 subfamily.</text>
</comment>
<organism>
    <name type="scientific">Pan troglodytes</name>
    <name type="common">Chimpanzee</name>
    <dbReference type="NCBI Taxonomy" id="9598"/>
    <lineage>
        <taxon>Eukaryota</taxon>
        <taxon>Metazoa</taxon>
        <taxon>Chordata</taxon>
        <taxon>Craniata</taxon>
        <taxon>Vertebrata</taxon>
        <taxon>Euteleostomi</taxon>
        <taxon>Mammalia</taxon>
        <taxon>Eutheria</taxon>
        <taxon>Euarchontoglires</taxon>
        <taxon>Primates</taxon>
        <taxon>Haplorrhini</taxon>
        <taxon>Catarrhini</taxon>
        <taxon>Hominidae</taxon>
        <taxon>Pan</taxon>
    </lineage>
</organism>
<sequence>MSGYSSDRDRGRDRGFGAPRFGGSRAGPLSGKKFGNPGEKLVKKKWNLDELPKFEKNFYQEHPDLARRTAQEVETYRRSKEITVRGHNCPKPVLNFYEANFPANVMDVIARQNFTEPTAIQAQGWPVALSGLDMVGVAQTGSGKTLSYLLPAIVHINHQPFLERGDGPICLVLAPTRELAQQVQQVAAEYCRACRLKSTCIYGGAPKGPQIRDLERGVENCIATPGRLIDFLECGKTNLRRTTYLVLDEADRMLDMGFEPQIRKIVDQIRPDRQTLMWSATWPKEVRQLAEDFLKDYIHINIGALELSANHNILQIVDVCHDVEKDEKLIRLMEEIMSEKENKTIVFVETKRRCDELTRKMRRDGWPAMGIHGDKSQQERDWVLNEFKHGKAPILIATDVASRGLDVEDVKFVINYDYPNSSEDYIHRIGRTARSTKTGTAYTFFTPNNIKQVSDLISVLREANQAINPKLLQLVEDRGSGRSRGRGGMKDDRRDRYSAGKRGGFNTFRDRENYDRGYSSLLKRDFGAKTQNGVYSAANYTNGSFGSNFVSAGIQASFRTGNPTGTYQNGYDSTQQYGSNVPNMHNGMNQQAYAYPATAAAPMIGYPMPTGYSQ</sequence>
<name>DDX5_PANTR</name>
<proteinExistence type="evidence at transcript level"/>
<accession>A5A6J2</accession>
<protein>
    <recommendedName>
        <fullName>Probable ATP-dependent RNA helicase DDX5</fullName>
        <ecNumber>3.6.4.13</ecNumber>
    </recommendedName>
    <alternativeName>
        <fullName>DEAD box protein 5</fullName>
    </alternativeName>
</protein>
<feature type="chain" id="PRO_0000295282" description="Probable ATP-dependent RNA helicase DDX5">
    <location>
        <begin position="1"/>
        <end position="614"/>
    </location>
</feature>
<feature type="domain" description="Helicase ATP-binding" evidence="4">
    <location>
        <begin position="125"/>
        <end position="300"/>
    </location>
</feature>
<feature type="domain" description="Helicase C-terminal" evidence="5">
    <location>
        <begin position="328"/>
        <end position="475"/>
    </location>
</feature>
<feature type="region of interest" description="Disordered" evidence="6">
    <location>
        <begin position="1"/>
        <end position="39"/>
    </location>
</feature>
<feature type="region of interest" description="Transactivation domain" evidence="1">
    <location>
        <begin position="477"/>
        <end position="614"/>
    </location>
</feature>
<feature type="region of interest" description="Disordered" evidence="6">
    <location>
        <begin position="477"/>
        <end position="504"/>
    </location>
</feature>
<feature type="short sequence motif" description="Q motif">
    <location>
        <begin position="94"/>
        <end position="122"/>
    </location>
</feature>
<feature type="short sequence motif" description="DEAD box">
    <location>
        <begin position="248"/>
        <end position="251"/>
    </location>
</feature>
<feature type="compositionally biased region" description="Basic and acidic residues" evidence="6">
    <location>
        <begin position="1"/>
        <end position="15"/>
    </location>
</feature>
<feature type="compositionally biased region" description="Basic and acidic residues" evidence="6">
    <location>
        <begin position="488"/>
        <end position="498"/>
    </location>
</feature>
<feature type="binding site" evidence="4">
    <location>
        <begin position="114"/>
        <end position="116"/>
    </location>
    <ligand>
        <name>ATP</name>
        <dbReference type="ChEBI" id="CHEBI:30616"/>
    </ligand>
</feature>
<feature type="binding site" evidence="1">
    <location>
        <position position="121"/>
    </location>
    <ligand>
        <name>ATP</name>
        <dbReference type="ChEBI" id="CHEBI:30616"/>
    </ligand>
</feature>
<feature type="binding site" evidence="4">
    <location>
        <begin position="138"/>
        <end position="145"/>
    </location>
    <ligand>
        <name>ATP</name>
        <dbReference type="ChEBI" id="CHEBI:30616"/>
    </ligand>
</feature>
<feature type="modified residue" description="Phosphoserine" evidence="2">
    <location>
        <position position="24"/>
    </location>
</feature>
<feature type="modified residue" description="N6-acetyllysine; alternate" evidence="2">
    <location>
        <position position="32"/>
    </location>
</feature>
<feature type="modified residue" description="N6-acetyllysine" evidence="2">
    <location>
        <position position="33"/>
    </location>
</feature>
<feature type="modified residue" description="N6-acetyllysine" evidence="2">
    <location>
        <position position="40"/>
    </location>
</feature>
<feature type="modified residue" description="N6-acetyllysine" evidence="3">
    <location>
        <position position="236"/>
    </location>
</feature>
<feature type="modified residue" description="Phosphotyrosine" evidence="2">
    <location>
        <position position="297"/>
    </location>
</feature>
<feature type="modified residue" description="Phosphoserine" evidence="2">
    <location>
        <position position="480"/>
    </location>
</feature>
<feature type="modified residue" description="Phosphoserine" evidence="2">
    <location>
        <position position="520"/>
    </location>
</feature>
<feature type="cross-link" description="Glycyl lysine isopeptide (Lys-Gly) (interchain with G-Cter in SUMO2); alternate" evidence="2">
    <location>
        <position position="32"/>
    </location>
</feature>
<feature type="cross-link" description="Glycyl lysine isopeptide (Lys-Gly) (interchain with G-Cter in SUMO2)" evidence="2">
    <location>
        <position position="45"/>
    </location>
</feature>
<feature type="cross-link" description="Glycyl lysine isopeptide (Lys-Gly) (interchain with G-Cter in SUMO); alternate" evidence="1">
    <location>
        <position position="53"/>
    </location>
</feature>
<feature type="cross-link" description="Glycyl lysine isopeptide (Lys-Gly) (interchain with G-Cter in SUMO1); alternate" evidence="2">
    <location>
        <position position="53"/>
    </location>
</feature>
<feature type="cross-link" description="Glycyl lysine isopeptide (Lys-Gly) (interchain with G-Cter in SUMO2); alternate" evidence="2">
    <location>
        <position position="53"/>
    </location>
</feature>
<feature type="cross-link" description="Glycyl lysine isopeptide (Lys-Gly) (interchain with G-Cter in SUMO2)" evidence="2">
    <location>
        <position position="340"/>
    </location>
</feature>
<feature type="cross-link" description="Glycyl lysine isopeptide (Lys-Gly) (interchain with G-Cter in SUMO2)" evidence="2">
    <location>
        <position position="343"/>
    </location>
</feature>
<feature type="cross-link" description="Glycyl lysine isopeptide (Lys-Gly) (interchain with G-Cter in SUMO2)" evidence="2">
    <location>
        <position position="388"/>
    </location>
</feature>
<feature type="cross-link" description="Glycyl lysine isopeptide (Lys-Gly) (interchain with G-Cter in SUMO2)" evidence="2">
    <location>
        <position position="391"/>
    </location>
</feature>
<feature type="cross-link" description="Glycyl lysine isopeptide (Lys-Gly) (interchain with G-Cter in SUMO2)" evidence="2">
    <location>
        <position position="411"/>
    </location>
</feature>
<feature type="cross-link" description="Glycyl lysine isopeptide (Lys-Gly) (interchain with G-Cter in SUMO2)" evidence="2">
    <location>
        <position position="437"/>
    </location>
</feature>
<feature type="cross-link" description="Glycyl lysine isopeptide (Lys-Gly) (interchain with G-Cter in SUMO2)" evidence="2">
    <location>
        <position position="451"/>
    </location>
</feature>
<feature type="cross-link" description="Glycyl lysine isopeptide (Lys-Gly) (interchain with G-Cter in SUMO2)" evidence="2">
    <location>
        <position position="470"/>
    </location>
</feature>
<feature type="cross-link" description="Glycyl lysine isopeptide (Lys-Gly) (interchain with G-Cter in SUMO2)" evidence="2">
    <location>
        <position position="523"/>
    </location>
</feature>
<gene>
    <name type="primary">DDX5</name>
</gene>
<reference key="1">
    <citation type="journal article" date="2007" name="Gene">
        <title>Mapping of chimpanzee full-length cDNAs onto the human genome unveils large potential divergence of the transcriptome.</title>
        <authorList>
            <person name="Sakate R."/>
            <person name="Suto Y."/>
            <person name="Imanishi T."/>
            <person name="Tanoue T."/>
            <person name="Hida M."/>
            <person name="Hayasaka I."/>
            <person name="Kusuda J."/>
            <person name="Gojobori T."/>
            <person name="Hashimoto K."/>
            <person name="Hirai M."/>
        </authorList>
    </citation>
    <scope>NUCLEOTIDE SEQUENCE [MRNA]</scope>
    <source>
        <tissue>Brain</tissue>
    </source>
</reference>
<evidence type="ECO:0000250" key="1"/>
<evidence type="ECO:0000250" key="2">
    <source>
        <dbReference type="UniProtKB" id="P17844"/>
    </source>
</evidence>
<evidence type="ECO:0000250" key="3">
    <source>
        <dbReference type="UniProtKB" id="Q61656"/>
    </source>
</evidence>
<evidence type="ECO:0000255" key="4">
    <source>
        <dbReference type="PROSITE-ProRule" id="PRU00541"/>
    </source>
</evidence>
<evidence type="ECO:0000255" key="5">
    <source>
        <dbReference type="PROSITE-ProRule" id="PRU00542"/>
    </source>
</evidence>
<evidence type="ECO:0000256" key="6">
    <source>
        <dbReference type="SAM" id="MobiDB-lite"/>
    </source>
</evidence>
<evidence type="ECO:0000305" key="7"/>
<dbReference type="EC" id="3.6.4.13"/>
<dbReference type="EMBL" id="AB222120">
    <property type="protein sequence ID" value="BAF62365.1"/>
    <property type="molecule type" value="mRNA"/>
</dbReference>
<dbReference type="RefSeq" id="NP_001138306.1">
    <property type="nucleotide sequence ID" value="NM_001144834.1"/>
</dbReference>
<dbReference type="SMR" id="A5A6J2"/>
<dbReference type="FunCoup" id="A5A6J2">
    <property type="interactions" value="3211"/>
</dbReference>
<dbReference type="STRING" id="9598.ENSPTRP00000016210"/>
<dbReference type="PaxDb" id="9598-ENSPTRP00000016210"/>
<dbReference type="GeneID" id="455267"/>
<dbReference type="KEGG" id="ptr:455267"/>
<dbReference type="CTD" id="1655"/>
<dbReference type="eggNOG" id="KOG0331">
    <property type="taxonomic scope" value="Eukaryota"/>
</dbReference>
<dbReference type="InParanoid" id="A5A6J2"/>
<dbReference type="OrthoDB" id="7459at9604"/>
<dbReference type="Proteomes" id="UP000002277">
    <property type="component" value="Unplaced"/>
</dbReference>
<dbReference type="GO" id="GO:0005737">
    <property type="term" value="C:cytoplasm"/>
    <property type="evidence" value="ECO:0000318"/>
    <property type="project" value="GO_Central"/>
</dbReference>
<dbReference type="GO" id="GO:0016607">
    <property type="term" value="C:nuclear speck"/>
    <property type="evidence" value="ECO:0000250"/>
    <property type="project" value="UniProtKB"/>
</dbReference>
<dbReference type="GO" id="GO:0005730">
    <property type="term" value="C:nucleolus"/>
    <property type="evidence" value="ECO:0000250"/>
    <property type="project" value="UniProtKB"/>
</dbReference>
<dbReference type="GO" id="GO:0005634">
    <property type="term" value="C:nucleus"/>
    <property type="evidence" value="ECO:0000250"/>
    <property type="project" value="UniProtKB"/>
</dbReference>
<dbReference type="GO" id="GO:1990904">
    <property type="term" value="C:ribonucleoprotein complex"/>
    <property type="evidence" value="ECO:0000318"/>
    <property type="project" value="GO_Central"/>
</dbReference>
<dbReference type="GO" id="GO:0005681">
    <property type="term" value="C:spliceosomal complex"/>
    <property type="evidence" value="ECO:0007669"/>
    <property type="project" value="UniProtKB-KW"/>
</dbReference>
<dbReference type="GO" id="GO:0005524">
    <property type="term" value="F:ATP binding"/>
    <property type="evidence" value="ECO:0007669"/>
    <property type="project" value="UniProtKB-KW"/>
</dbReference>
<dbReference type="GO" id="GO:0016887">
    <property type="term" value="F:ATP hydrolysis activity"/>
    <property type="evidence" value="ECO:0007669"/>
    <property type="project" value="RHEA"/>
</dbReference>
<dbReference type="GO" id="GO:0003730">
    <property type="term" value="F:mRNA 3'-UTR binding"/>
    <property type="evidence" value="ECO:0000250"/>
    <property type="project" value="UniProtKB"/>
</dbReference>
<dbReference type="GO" id="GO:0003729">
    <property type="term" value="F:mRNA binding"/>
    <property type="evidence" value="ECO:0000318"/>
    <property type="project" value="GO_Central"/>
</dbReference>
<dbReference type="GO" id="GO:0050681">
    <property type="term" value="F:nuclear androgen receptor binding"/>
    <property type="evidence" value="ECO:0000250"/>
    <property type="project" value="UniProtKB"/>
</dbReference>
<dbReference type="GO" id="GO:1990841">
    <property type="term" value="F:promoter-specific chromatin binding"/>
    <property type="evidence" value="ECO:0000250"/>
    <property type="project" value="UniProtKB"/>
</dbReference>
<dbReference type="GO" id="GO:0043021">
    <property type="term" value="F:ribonucleoprotein complex binding"/>
    <property type="evidence" value="ECO:0000250"/>
    <property type="project" value="UniProtKB"/>
</dbReference>
<dbReference type="GO" id="GO:0003724">
    <property type="term" value="F:RNA helicase activity"/>
    <property type="evidence" value="ECO:0000250"/>
    <property type="project" value="UniProtKB"/>
</dbReference>
<dbReference type="GO" id="GO:0000380">
    <property type="term" value="P:alternative mRNA splicing, via spliceosome"/>
    <property type="evidence" value="ECO:0000250"/>
    <property type="project" value="UniProtKB"/>
</dbReference>
<dbReference type="GO" id="GO:0030521">
    <property type="term" value="P:androgen receptor signaling pathway"/>
    <property type="evidence" value="ECO:0000250"/>
    <property type="project" value="UniProtKB"/>
</dbReference>
<dbReference type="GO" id="GO:0001837">
    <property type="term" value="P:epithelial to mesenchymal transition"/>
    <property type="evidence" value="ECO:0000250"/>
    <property type="project" value="UniProtKB"/>
</dbReference>
<dbReference type="GO" id="GO:0030520">
    <property type="term" value="P:estrogen receptor signaling pathway"/>
    <property type="evidence" value="ECO:0000250"/>
    <property type="project" value="UniProtKB"/>
</dbReference>
<dbReference type="GO" id="GO:0072332">
    <property type="term" value="P:intrinsic apoptotic signaling pathway by p53 class mediator"/>
    <property type="evidence" value="ECO:0000250"/>
    <property type="project" value="UniProtKB"/>
</dbReference>
<dbReference type="GO" id="GO:0061614">
    <property type="term" value="P:miRNA transcription"/>
    <property type="evidence" value="ECO:0000250"/>
    <property type="project" value="UniProtKB"/>
</dbReference>
<dbReference type="GO" id="GO:0045445">
    <property type="term" value="P:myoblast differentiation"/>
    <property type="evidence" value="ECO:0000250"/>
    <property type="project" value="UniProtKB"/>
</dbReference>
<dbReference type="GO" id="GO:0000122">
    <property type="term" value="P:negative regulation of transcription by RNA polymerase II"/>
    <property type="evidence" value="ECO:0000250"/>
    <property type="project" value="UniProtKB"/>
</dbReference>
<dbReference type="GO" id="GO:0000956">
    <property type="term" value="P:nuclear-transcribed mRNA catabolic process"/>
    <property type="evidence" value="ECO:0000250"/>
    <property type="project" value="UniProtKB"/>
</dbReference>
<dbReference type="GO" id="GO:0043517">
    <property type="term" value="P:positive regulation of DNA damage response, signal transduction by p53 class mediator"/>
    <property type="evidence" value="ECO:0000250"/>
    <property type="project" value="UniProtKB"/>
</dbReference>
<dbReference type="GO" id="GO:0000381">
    <property type="term" value="P:regulation of alternative mRNA splicing, via spliceosome"/>
    <property type="evidence" value="ECO:0000250"/>
    <property type="project" value="UniProtKB"/>
</dbReference>
<dbReference type="GO" id="GO:0060765">
    <property type="term" value="P:regulation of androgen receptor signaling pathway"/>
    <property type="evidence" value="ECO:0000250"/>
    <property type="project" value="UniProtKB"/>
</dbReference>
<dbReference type="GO" id="GO:0045667">
    <property type="term" value="P:regulation of osteoblast differentiation"/>
    <property type="evidence" value="ECO:0000250"/>
    <property type="project" value="UniProtKB"/>
</dbReference>
<dbReference type="GO" id="GO:2001014">
    <property type="term" value="P:regulation of skeletal muscle cell differentiation"/>
    <property type="evidence" value="ECO:0000250"/>
    <property type="project" value="UniProtKB"/>
</dbReference>
<dbReference type="GO" id="GO:0006357">
    <property type="term" value="P:regulation of transcription by RNA polymerase II"/>
    <property type="evidence" value="ECO:0000250"/>
    <property type="project" value="UniProtKB"/>
</dbReference>
<dbReference type="GO" id="GO:0048511">
    <property type="term" value="P:rhythmic process"/>
    <property type="evidence" value="ECO:0007669"/>
    <property type="project" value="UniProtKB-KW"/>
</dbReference>
<dbReference type="CDD" id="cd18049">
    <property type="entry name" value="DEADc_DDX5"/>
    <property type="match status" value="1"/>
</dbReference>
<dbReference type="CDD" id="cd18787">
    <property type="entry name" value="SF2_C_DEAD"/>
    <property type="match status" value="1"/>
</dbReference>
<dbReference type="FunFam" id="3.40.50.300:FF:000008">
    <property type="entry name" value="ATP-dependent RNA helicase RhlB"/>
    <property type="match status" value="1"/>
</dbReference>
<dbReference type="FunFam" id="3.40.50.300:FF:000079">
    <property type="entry name" value="probable ATP-dependent RNA helicase DDX17"/>
    <property type="match status" value="1"/>
</dbReference>
<dbReference type="Gene3D" id="3.40.50.300">
    <property type="entry name" value="P-loop containing nucleotide triphosphate hydrolases"/>
    <property type="match status" value="2"/>
</dbReference>
<dbReference type="InterPro" id="IPR011545">
    <property type="entry name" value="DEAD/DEAH_box_helicase_dom"/>
</dbReference>
<dbReference type="InterPro" id="IPR014001">
    <property type="entry name" value="Helicase_ATP-bd"/>
</dbReference>
<dbReference type="InterPro" id="IPR001650">
    <property type="entry name" value="Helicase_C-like"/>
</dbReference>
<dbReference type="InterPro" id="IPR027417">
    <property type="entry name" value="P-loop_NTPase"/>
</dbReference>
<dbReference type="InterPro" id="IPR012587">
    <property type="entry name" value="P68_rpt"/>
</dbReference>
<dbReference type="InterPro" id="IPR000629">
    <property type="entry name" value="RNA-helicase_DEAD-box_CS"/>
</dbReference>
<dbReference type="InterPro" id="IPR014014">
    <property type="entry name" value="RNA_helicase_DEAD_Q_motif"/>
</dbReference>
<dbReference type="PANTHER" id="PTHR47958">
    <property type="entry name" value="ATP-DEPENDENT RNA HELICASE DBP3"/>
    <property type="match status" value="1"/>
</dbReference>
<dbReference type="Pfam" id="PF00270">
    <property type="entry name" value="DEAD"/>
    <property type="match status" value="1"/>
</dbReference>
<dbReference type="Pfam" id="PF00271">
    <property type="entry name" value="Helicase_C"/>
    <property type="match status" value="1"/>
</dbReference>
<dbReference type="Pfam" id="PF08061">
    <property type="entry name" value="P68HR"/>
    <property type="match status" value="2"/>
</dbReference>
<dbReference type="SMART" id="SM00487">
    <property type="entry name" value="DEXDc"/>
    <property type="match status" value="1"/>
</dbReference>
<dbReference type="SMART" id="SM00490">
    <property type="entry name" value="HELICc"/>
    <property type="match status" value="1"/>
</dbReference>
<dbReference type="SMART" id="SM01414">
    <property type="entry name" value="P68HR"/>
    <property type="match status" value="2"/>
</dbReference>
<dbReference type="SUPFAM" id="SSF52540">
    <property type="entry name" value="P-loop containing nucleoside triphosphate hydrolases"/>
    <property type="match status" value="1"/>
</dbReference>
<dbReference type="PROSITE" id="PS00039">
    <property type="entry name" value="DEAD_ATP_HELICASE"/>
    <property type="match status" value="1"/>
</dbReference>
<dbReference type="PROSITE" id="PS51192">
    <property type="entry name" value="HELICASE_ATP_BIND_1"/>
    <property type="match status" value="1"/>
</dbReference>
<dbReference type="PROSITE" id="PS51194">
    <property type="entry name" value="HELICASE_CTER"/>
    <property type="match status" value="1"/>
</dbReference>
<dbReference type="PROSITE" id="PS51195">
    <property type="entry name" value="Q_MOTIF"/>
    <property type="match status" value="1"/>
</dbReference>
<keyword id="KW-0007">Acetylation</keyword>
<keyword id="KW-0067">ATP-binding</keyword>
<keyword id="KW-0090">Biological rhythms</keyword>
<keyword id="KW-0963">Cytoplasm</keyword>
<keyword id="KW-0347">Helicase</keyword>
<keyword id="KW-0378">Hydrolase</keyword>
<keyword id="KW-1017">Isopeptide bond</keyword>
<keyword id="KW-0488">Methylation</keyword>
<keyword id="KW-0507">mRNA processing</keyword>
<keyword id="KW-0508">mRNA splicing</keyword>
<keyword id="KW-0547">Nucleotide-binding</keyword>
<keyword id="KW-0539">Nucleus</keyword>
<keyword id="KW-0597">Phosphoprotein</keyword>
<keyword id="KW-1185">Reference proteome</keyword>
<keyword id="KW-0694">RNA-binding</keyword>
<keyword id="KW-0747">Spliceosome</keyword>
<keyword id="KW-0804">Transcription</keyword>
<keyword id="KW-0805">Transcription regulation</keyword>
<keyword id="KW-0832">Ubl conjugation</keyword>